<comment type="function">
    <text evidence="1">Responsible for the release of ribosomes from messenger RNA at the termination of protein biosynthesis. May increase the efficiency of translation by recycling ribosomes from one round of translation to another.</text>
</comment>
<comment type="subcellular location">
    <subcellularLocation>
        <location evidence="1">Cytoplasm</location>
    </subcellularLocation>
</comment>
<comment type="similarity">
    <text evidence="1">Belongs to the RRF family.</text>
</comment>
<organism>
    <name type="scientific">Mycobacterium sp. (strain KMS)</name>
    <dbReference type="NCBI Taxonomy" id="189918"/>
    <lineage>
        <taxon>Bacteria</taxon>
        <taxon>Bacillati</taxon>
        <taxon>Actinomycetota</taxon>
        <taxon>Actinomycetes</taxon>
        <taxon>Mycobacteriales</taxon>
        <taxon>Mycobacteriaceae</taxon>
        <taxon>Mycobacterium</taxon>
    </lineage>
</organism>
<proteinExistence type="inferred from homology"/>
<dbReference type="EMBL" id="CP000518">
    <property type="protein sequence ID" value="ABL91249.1"/>
    <property type="molecule type" value="Genomic_DNA"/>
</dbReference>
<dbReference type="SMR" id="A1UEJ1"/>
<dbReference type="STRING" id="189918.Mkms_2050"/>
<dbReference type="KEGG" id="mkm:Mkms_2050"/>
<dbReference type="HOGENOM" id="CLU_073981_2_0_11"/>
<dbReference type="OrthoDB" id="9804006at2"/>
<dbReference type="GO" id="GO:0005737">
    <property type="term" value="C:cytoplasm"/>
    <property type="evidence" value="ECO:0007669"/>
    <property type="project" value="UniProtKB-SubCell"/>
</dbReference>
<dbReference type="GO" id="GO:0043023">
    <property type="term" value="F:ribosomal large subunit binding"/>
    <property type="evidence" value="ECO:0007669"/>
    <property type="project" value="TreeGrafter"/>
</dbReference>
<dbReference type="GO" id="GO:0006415">
    <property type="term" value="P:translational termination"/>
    <property type="evidence" value="ECO:0007669"/>
    <property type="project" value="UniProtKB-UniRule"/>
</dbReference>
<dbReference type="CDD" id="cd00520">
    <property type="entry name" value="RRF"/>
    <property type="match status" value="1"/>
</dbReference>
<dbReference type="FunFam" id="1.10.132.20:FF:000001">
    <property type="entry name" value="Ribosome-recycling factor"/>
    <property type="match status" value="1"/>
</dbReference>
<dbReference type="FunFam" id="3.30.1360.40:FF:000001">
    <property type="entry name" value="Ribosome-recycling factor"/>
    <property type="match status" value="1"/>
</dbReference>
<dbReference type="Gene3D" id="3.30.1360.40">
    <property type="match status" value="1"/>
</dbReference>
<dbReference type="Gene3D" id="1.10.132.20">
    <property type="entry name" value="Ribosome-recycling factor"/>
    <property type="match status" value="1"/>
</dbReference>
<dbReference type="HAMAP" id="MF_00040">
    <property type="entry name" value="RRF"/>
    <property type="match status" value="1"/>
</dbReference>
<dbReference type="InterPro" id="IPR002661">
    <property type="entry name" value="Ribosome_recyc_fac"/>
</dbReference>
<dbReference type="InterPro" id="IPR023584">
    <property type="entry name" value="Ribosome_recyc_fac_dom"/>
</dbReference>
<dbReference type="InterPro" id="IPR036191">
    <property type="entry name" value="RRF_sf"/>
</dbReference>
<dbReference type="NCBIfam" id="TIGR00496">
    <property type="entry name" value="frr"/>
    <property type="match status" value="1"/>
</dbReference>
<dbReference type="PANTHER" id="PTHR20982:SF3">
    <property type="entry name" value="MITOCHONDRIAL RIBOSOME RECYCLING FACTOR PSEUDO 1"/>
    <property type="match status" value="1"/>
</dbReference>
<dbReference type="PANTHER" id="PTHR20982">
    <property type="entry name" value="RIBOSOME RECYCLING FACTOR"/>
    <property type="match status" value="1"/>
</dbReference>
<dbReference type="Pfam" id="PF01765">
    <property type="entry name" value="RRF"/>
    <property type="match status" value="1"/>
</dbReference>
<dbReference type="SUPFAM" id="SSF55194">
    <property type="entry name" value="Ribosome recycling factor, RRF"/>
    <property type="match status" value="1"/>
</dbReference>
<protein>
    <recommendedName>
        <fullName evidence="1">Ribosome-recycling factor</fullName>
        <shortName evidence="1">RRF</shortName>
    </recommendedName>
    <alternativeName>
        <fullName evidence="1">Ribosome-releasing factor</fullName>
    </alternativeName>
</protein>
<gene>
    <name evidence="1" type="primary">frr</name>
    <name type="ordered locus">Mkms_2050</name>
</gene>
<accession>A1UEJ1</accession>
<keyword id="KW-0963">Cytoplasm</keyword>
<keyword id="KW-0648">Protein biosynthesis</keyword>
<feature type="chain" id="PRO_1000003203" description="Ribosome-recycling factor">
    <location>
        <begin position="1"/>
        <end position="185"/>
    </location>
</feature>
<feature type="region of interest" description="Disordered" evidence="2">
    <location>
        <begin position="145"/>
        <end position="164"/>
    </location>
</feature>
<evidence type="ECO:0000255" key="1">
    <source>
        <dbReference type="HAMAP-Rule" id="MF_00040"/>
    </source>
</evidence>
<evidence type="ECO:0000256" key="2">
    <source>
        <dbReference type="SAM" id="MobiDB-lite"/>
    </source>
</evidence>
<name>RRF_MYCSK</name>
<reference key="1">
    <citation type="submission" date="2006-12" db="EMBL/GenBank/DDBJ databases">
        <title>Complete sequence of chromosome of Mycobacterium sp. KMS.</title>
        <authorList>
            <consortium name="US DOE Joint Genome Institute"/>
            <person name="Copeland A."/>
            <person name="Lucas S."/>
            <person name="Lapidus A."/>
            <person name="Barry K."/>
            <person name="Detter J.C."/>
            <person name="Glavina del Rio T."/>
            <person name="Hammon N."/>
            <person name="Israni S."/>
            <person name="Dalin E."/>
            <person name="Tice H."/>
            <person name="Pitluck S."/>
            <person name="Kiss H."/>
            <person name="Brettin T."/>
            <person name="Bruce D."/>
            <person name="Han C."/>
            <person name="Tapia R."/>
            <person name="Gilna P."/>
            <person name="Schmutz J."/>
            <person name="Larimer F."/>
            <person name="Land M."/>
            <person name="Hauser L."/>
            <person name="Kyrpides N."/>
            <person name="Mikhailova N."/>
            <person name="Miller C.D."/>
            <person name="Richardson P."/>
        </authorList>
    </citation>
    <scope>NUCLEOTIDE SEQUENCE [LARGE SCALE GENOMIC DNA]</scope>
    <source>
        <strain>KMS</strain>
    </source>
</reference>
<sequence length="185" mass="20892">MIDETLFDAEEKMEKAVSVARDDLSSIRTGRANPGMFSRINVDYYGATTPITQLSSINVPEARMVVIKPYEANQLRNIEDAIRNSDLGVNPTNDGNIIRVSIPQLTEERRRDLVKQAKAKGEDAKVSVRNIRRKAMEELARIKKDGEAGEDEVSRAEKDLDKTTHTYTHQIDELVKHKEGELLEV</sequence>